<proteinExistence type="inferred from homology"/>
<name>RS5_PERMH</name>
<gene>
    <name evidence="1" type="primary">rpsE</name>
    <name type="ordered locus">PERMA_1213</name>
</gene>
<feature type="chain" id="PRO_1000165460" description="Small ribosomal subunit protein uS5">
    <location>
        <begin position="1"/>
        <end position="194"/>
    </location>
</feature>
<feature type="domain" description="S5 DRBM" evidence="1">
    <location>
        <begin position="26"/>
        <end position="89"/>
    </location>
</feature>
<reference key="1">
    <citation type="journal article" date="2009" name="J. Bacteriol.">
        <title>Complete and draft genome sequences of six members of the Aquificales.</title>
        <authorList>
            <person name="Reysenbach A.-L."/>
            <person name="Hamamura N."/>
            <person name="Podar M."/>
            <person name="Griffiths E."/>
            <person name="Ferreira S."/>
            <person name="Hochstein R."/>
            <person name="Heidelberg J."/>
            <person name="Johnson J."/>
            <person name="Mead D."/>
            <person name="Pohorille A."/>
            <person name="Sarmiento M."/>
            <person name="Schweighofer K."/>
            <person name="Seshadri R."/>
            <person name="Voytek M.A."/>
        </authorList>
    </citation>
    <scope>NUCLEOTIDE SEQUENCE [LARGE SCALE GENOMIC DNA]</scope>
    <source>
        <strain>DSM 14350 / EX-H1</strain>
    </source>
</reference>
<sequence>MGVKNIERLIEERQKIEPINPAELTLEEKVVEIRRTTRVVEGGRRFSFSTLAVVGDRNGHVGFGHGKANEVPPSIAKAIADAKKHLIRVPLIEGTIPHDVIGKYESAVVLLKPARKGTGVVAGGPVRPVLELLGVTDILTKIIGRTTNPNNTVRAVFDALLQIRSPEQVAAIRGVDEEKIRKNYRIYASAPIVK</sequence>
<dbReference type="EMBL" id="CP001230">
    <property type="protein sequence ID" value="ACO02972.1"/>
    <property type="molecule type" value="Genomic_DNA"/>
</dbReference>
<dbReference type="RefSeq" id="WP_012675211.1">
    <property type="nucleotide sequence ID" value="NC_012440.1"/>
</dbReference>
<dbReference type="SMR" id="C0QQP0"/>
<dbReference type="STRING" id="123214.PERMA_1213"/>
<dbReference type="PaxDb" id="123214-PERMA_1213"/>
<dbReference type="KEGG" id="pmx:PERMA_1213"/>
<dbReference type="eggNOG" id="COG0098">
    <property type="taxonomic scope" value="Bacteria"/>
</dbReference>
<dbReference type="HOGENOM" id="CLU_065898_2_2_0"/>
<dbReference type="OrthoDB" id="9809045at2"/>
<dbReference type="Proteomes" id="UP000001366">
    <property type="component" value="Chromosome"/>
</dbReference>
<dbReference type="GO" id="GO:0015935">
    <property type="term" value="C:small ribosomal subunit"/>
    <property type="evidence" value="ECO:0007669"/>
    <property type="project" value="InterPro"/>
</dbReference>
<dbReference type="GO" id="GO:0019843">
    <property type="term" value="F:rRNA binding"/>
    <property type="evidence" value="ECO:0007669"/>
    <property type="project" value="UniProtKB-UniRule"/>
</dbReference>
<dbReference type="GO" id="GO:0003735">
    <property type="term" value="F:structural constituent of ribosome"/>
    <property type="evidence" value="ECO:0007669"/>
    <property type="project" value="InterPro"/>
</dbReference>
<dbReference type="GO" id="GO:0006412">
    <property type="term" value="P:translation"/>
    <property type="evidence" value="ECO:0007669"/>
    <property type="project" value="UniProtKB-UniRule"/>
</dbReference>
<dbReference type="FunFam" id="3.30.160.20:FF:000001">
    <property type="entry name" value="30S ribosomal protein S5"/>
    <property type="match status" value="1"/>
</dbReference>
<dbReference type="FunFam" id="3.30.230.10:FF:000002">
    <property type="entry name" value="30S ribosomal protein S5"/>
    <property type="match status" value="1"/>
</dbReference>
<dbReference type="Gene3D" id="3.30.160.20">
    <property type="match status" value="1"/>
</dbReference>
<dbReference type="Gene3D" id="3.30.230.10">
    <property type="match status" value="1"/>
</dbReference>
<dbReference type="HAMAP" id="MF_01307_B">
    <property type="entry name" value="Ribosomal_uS5_B"/>
    <property type="match status" value="1"/>
</dbReference>
<dbReference type="InterPro" id="IPR020568">
    <property type="entry name" value="Ribosomal_Su5_D2-typ_SF"/>
</dbReference>
<dbReference type="InterPro" id="IPR000851">
    <property type="entry name" value="Ribosomal_uS5"/>
</dbReference>
<dbReference type="InterPro" id="IPR005712">
    <property type="entry name" value="Ribosomal_uS5_bac-type"/>
</dbReference>
<dbReference type="InterPro" id="IPR005324">
    <property type="entry name" value="Ribosomal_uS5_C"/>
</dbReference>
<dbReference type="InterPro" id="IPR013810">
    <property type="entry name" value="Ribosomal_uS5_N"/>
</dbReference>
<dbReference type="InterPro" id="IPR018192">
    <property type="entry name" value="Ribosomal_uS5_N_CS"/>
</dbReference>
<dbReference type="InterPro" id="IPR014721">
    <property type="entry name" value="Ribsml_uS5_D2-typ_fold_subgr"/>
</dbReference>
<dbReference type="NCBIfam" id="TIGR01021">
    <property type="entry name" value="rpsE_bact"/>
    <property type="match status" value="1"/>
</dbReference>
<dbReference type="PANTHER" id="PTHR48277">
    <property type="entry name" value="MITOCHONDRIAL RIBOSOMAL PROTEIN S5"/>
    <property type="match status" value="1"/>
</dbReference>
<dbReference type="PANTHER" id="PTHR48277:SF1">
    <property type="entry name" value="MITOCHONDRIAL RIBOSOMAL PROTEIN S5"/>
    <property type="match status" value="1"/>
</dbReference>
<dbReference type="Pfam" id="PF00333">
    <property type="entry name" value="Ribosomal_S5"/>
    <property type="match status" value="1"/>
</dbReference>
<dbReference type="Pfam" id="PF03719">
    <property type="entry name" value="Ribosomal_S5_C"/>
    <property type="match status" value="1"/>
</dbReference>
<dbReference type="SUPFAM" id="SSF54768">
    <property type="entry name" value="dsRNA-binding domain-like"/>
    <property type="match status" value="1"/>
</dbReference>
<dbReference type="SUPFAM" id="SSF54211">
    <property type="entry name" value="Ribosomal protein S5 domain 2-like"/>
    <property type="match status" value="1"/>
</dbReference>
<dbReference type="PROSITE" id="PS00585">
    <property type="entry name" value="RIBOSOMAL_S5"/>
    <property type="match status" value="1"/>
</dbReference>
<dbReference type="PROSITE" id="PS50881">
    <property type="entry name" value="S5_DSRBD"/>
    <property type="match status" value="1"/>
</dbReference>
<accession>C0QQP0</accession>
<organism>
    <name type="scientific">Persephonella marina (strain DSM 14350 / EX-H1)</name>
    <dbReference type="NCBI Taxonomy" id="123214"/>
    <lineage>
        <taxon>Bacteria</taxon>
        <taxon>Pseudomonadati</taxon>
        <taxon>Aquificota</taxon>
        <taxon>Aquificia</taxon>
        <taxon>Aquificales</taxon>
        <taxon>Hydrogenothermaceae</taxon>
        <taxon>Persephonella</taxon>
    </lineage>
</organism>
<protein>
    <recommendedName>
        <fullName evidence="1">Small ribosomal subunit protein uS5</fullName>
    </recommendedName>
    <alternativeName>
        <fullName evidence="2">30S ribosomal protein S5</fullName>
    </alternativeName>
</protein>
<keyword id="KW-1185">Reference proteome</keyword>
<keyword id="KW-0687">Ribonucleoprotein</keyword>
<keyword id="KW-0689">Ribosomal protein</keyword>
<keyword id="KW-0694">RNA-binding</keyword>
<keyword id="KW-0699">rRNA-binding</keyword>
<comment type="function">
    <text evidence="1">With S4 and S12 plays an important role in translational accuracy.</text>
</comment>
<comment type="function">
    <text evidence="1">Located at the back of the 30S subunit body where it stabilizes the conformation of the head with respect to the body.</text>
</comment>
<comment type="subunit">
    <text evidence="1">Part of the 30S ribosomal subunit. Contacts proteins S4 and S8.</text>
</comment>
<comment type="domain">
    <text>The N-terminal domain interacts with the head of the 30S subunit; the C-terminal domain interacts with the body and contacts protein S4. The interaction surface between S4 and S5 is involved in control of translational fidelity.</text>
</comment>
<comment type="similarity">
    <text evidence="1">Belongs to the universal ribosomal protein uS5 family.</text>
</comment>
<evidence type="ECO:0000255" key="1">
    <source>
        <dbReference type="HAMAP-Rule" id="MF_01307"/>
    </source>
</evidence>
<evidence type="ECO:0000305" key="2"/>